<evidence type="ECO:0000269" key="1">
    <source>
    </source>
</evidence>
<evidence type="ECO:0000303" key="2">
    <source>
    </source>
</evidence>
<evidence type="ECO:0000303" key="3">
    <source>
    </source>
</evidence>
<evidence type="ECO:0000305" key="4"/>
<organism>
    <name type="scientific">Paramecium bursaria Chlorella virus IL3A</name>
    <name type="common">PBCV-IL3A</name>
    <dbReference type="NCBI Taxonomy" id="46019"/>
    <lineage>
        <taxon>Viruses</taxon>
        <taxon>Varidnaviria</taxon>
        <taxon>Bamfordvirae</taxon>
        <taxon>Nucleocytoviricota</taxon>
        <taxon>Megaviricetes</taxon>
        <taxon>Algavirales</taxon>
        <taxon>Phycodnaviridae</taxon>
        <taxon>Chlorovirus</taxon>
    </lineage>
</organism>
<reference key="1">
    <citation type="journal article" date="1995" name="Gene">
        <title>Cloning and applications of the two/three-base restriction endonuclease R.CviJI from IL-3A virus-infected Chlorella.</title>
        <authorList>
            <person name="Skowron P.M."/>
            <person name="Swaminathan N."/>
            <person name="McMaster K."/>
            <person name="George D."/>
            <person name="van Etten J.L."/>
            <person name="Mead D.A."/>
        </authorList>
    </citation>
    <scope>NUCLEOTIDE SEQUENCE [GENOMIC DNA]</scope>
</reference>
<reference key="2">
    <citation type="journal article" date="1996" name="Nucleic Acids Res.">
        <title>Molecular cloning of the three base restriction endonuclease R.CviJI from eukaryotic Chlorella virus IL-3A.</title>
        <authorList>
            <person name="Swaminathan N."/>
            <person name="Mead D.A."/>
            <person name="McMaster K."/>
            <person name="George D."/>
            <person name="van Etten J.L."/>
            <person name="Skowron P.M."/>
        </authorList>
    </citation>
    <scope>NUCLEOTIDE SEQUENCE [GENOMIC DNA]</scope>
    <scope>PROTEIN SEQUENCE OF 81-95</scope>
    <scope>FUNCTION</scope>
    <scope>CATALYTIC ACTIVITY</scope>
</reference>
<reference key="3">
    <citation type="journal article" date="2003" name="Nucleic Acids Res.">
        <title>A nomenclature for restriction enzymes, DNA methyltransferases, homing endonucleases and their genes.</title>
        <authorList>
            <person name="Roberts R.J."/>
            <person name="Belfort M."/>
            <person name="Bestor T."/>
            <person name="Bhagwat A.S."/>
            <person name="Bickle T.A."/>
            <person name="Bitinaite J."/>
            <person name="Blumenthal R.M."/>
            <person name="Degtyarev S.K."/>
            <person name="Dryden D.T."/>
            <person name="Dybvig K."/>
            <person name="Firman K."/>
            <person name="Gromova E.S."/>
            <person name="Gumport R.I."/>
            <person name="Halford S.E."/>
            <person name="Hattman S."/>
            <person name="Heitman J."/>
            <person name="Hornby D.P."/>
            <person name="Janulaitis A."/>
            <person name="Jeltsch A."/>
            <person name="Josephsen J."/>
            <person name="Kiss A."/>
            <person name="Klaenhammer T.R."/>
            <person name="Kobayashi I."/>
            <person name="Kong H."/>
            <person name="Krueger D.H."/>
            <person name="Lacks S."/>
            <person name="Marinus M.G."/>
            <person name="Miyahara M."/>
            <person name="Morgan R.D."/>
            <person name="Murray N.E."/>
            <person name="Nagaraja V."/>
            <person name="Piekarowicz A."/>
            <person name="Pingoud A."/>
            <person name="Raleigh E."/>
            <person name="Rao D.N."/>
            <person name="Reich N."/>
            <person name="Repin V.E."/>
            <person name="Selker E.U."/>
            <person name="Shaw P.C."/>
            <person name="Stein D.C."/>
            <person name="Stoddard B.L."/>
            <person name="Szybalski W."/>
            <person name="Trautner T.A."/>
            <person name="Van Etten J.L."/>
            <person name="Vitor J.M."/>
            <person name="Wilson G.G."/>
            <person name="Xu S.Y."/>
        </authorList>
    </citation>
    <scope>NOMENCLATURE</scope>
    <scope>SUBTYPE</scope>
</reference>
<accession>P52283</accession>
<proteinExistence type="evidence at protein level"/>
<sequence length="358" mass="41468">MDIRRKRFTIEGAKRIILEKKRLEEKKRIAEEKKRIALIEKQRIAEEKKRIAEEKKRFALEEKKRIAEEKKRIAEEKKRIVEEKKRLALIEKQRIAEEKIASGRKIRKRISTNATKHEREFVKVINSMFVGPATFVFVDIKGNKSREIHNVVRFRQLQGSKAKSPTAYVDREYNKPKADIAAVDITGKDVAWISHKASEGYQQYLKISGKNLKFTGKELEEVLSFKRKVVSMAPVSKIWPANKTVWSPIKSNLIKNQAIFGFDYGKKPGRDNVDIIGQGRPIITKRGSILYLTFTGFSALNGHLENFTGKHEPVFYVRTERSSSGRSITTVVNGVTYKNLRFFIHPYNFVSSKTQRIM</sequence>
<protein>
    <recommendedName>
        <fullName evidence="2">Type II restriction enzyme CviJI</fullName>
        <shortName evidence="3">R.CviJI</shortName>
        <ecNumber evidence="1">3.1.21.4</ecNumber>
    </recommendedName>
    <alternativeName>
        <fullName>Endonuclease CviJI</fullName>
    </alternativeName>
    <alternativeName>
        <fullName>Type-2 restriction enzyme CviJI</fullName>
    </alternativeName>
</protein>
<comment type="function">
    <text evidence="1 2">A P subtype restriction enzyme that recognizes the double-stranded sequence 5'-RGCY-3' and cleaves after G-2. In the presence of ATP, there is a relaxation of its specificity and it can cleave 5'-RGCN-3' and 5'-YGCY-3', but not 5'-YGCR-3' (R.CviJI* activity).</text>
</comment>
<comment type="catalytic activity">
    <reaction evidence="1">
        <text>Endonucleolytic cleavage of DNA to give specific double-stranded fragments with terminal 5'-phosphates.</text>
        <dbReference type="EC" id="3.1.21.4"/>
    </reaction>
</comment>
<comment type="cofactor">
    <cofactor>
        <name>Mg(2+)</name>
        <dbReference type="ChEBI" id="CHEBI:18420"/>
    </cofactor>
</comment>
<comment type="caution">
    <text evidence="1">It is uncertain whether Met-1 or Val-81 is the initiator; upon expression in E.coli the protein is 32.5 kDa and starts at Val-81. Recombinant enzyme has no R.CviJI* activity, whereas viral-produced enzyme is larger than 32.5 kDa and does have R.CviJI* activity, suggesting Met-1 is the correct initiator when grown in Chlorella strain NC64A.</text>
</comment>
<comment type="sequence caution" evidence="4">
    <conflict type="erroneous initiation">
        <sequence resource="EMBL-CDS" id="AAC55064"/>
    </conflict>
    <text>Truncated N-terminus.</text>
</comment>
<feature type="chain" id="PRO_0000077298" description="Type II restriction enzyme CviJI">
    <location>
        <begin position="1"/>
        <end position="358"/>
    </location>
</feature>
<dbReference type="EC" id="3.1.21.4" evidence="1"/>
<dbReference type="EMBL" id="U09001">
    <property type="protein sequence ID" value="AAC55064.1"/>
    <property type="status" value="ALT_INIT"/>
    <property type="molecule type" value="Genomic_DNA"/>
</dbReference>
<dbReference type="SMR" id="P52283"/>
<dbReference type="REBASE" id="760">
    <property type="entry name" value="CviJI"/>
</dbReference>
<dbReference type="PRO" id="PR:P52283"/>
<dbReference type="GO" id="GO:0009036">
    <property type="term" value="F:type II site-specific deoxyribonuclease activity"/>
    <property type="evidence" value="ECO:0007669"/>
    <property type="project" value="UniProtKB-EC"/>
</dbReference>
<dbReference type="GO" id="GO:0009307">
    <property type="term" value="P:DNA restriction-modification system"/>
    <property type="evidence" value="ECO:0007669"/>
    <property type="project" value="UniProtKB-KW"/>
</dbReference>
<dbReference type="Pfam" id="PF17380">
    <property type="entry name" value="DUF5401"/>
    <property type="match status" value="1"/>
</dbReference>
<gene>
    <name evidence="3" type="primary">CVJIR</name>
</gene>
<organismHost>
    <name type="scientific">Chlorella</name>
    <dbReference type="NCBI Taxonomy" id="3071"/>
</organismHost>
<keyword id="KW-0903">Direct protein sequencing</keyword>
<keyword id="KW-0255">Endonuclease</keyword>
<keyword id="KW-0378">Hydrolase</keyword>
<keyword id="KW-0460">Magnesium</keyword>
<keyword id="KW-0540">Nuclease</keyword>
<keyword id="KW-0680">Restriction system</keyword>
<name>T2C1_PBCVI</name>